<keyword id="KW-0150">Chloroplast</keyword>
<keyword id="KW-0934">Plastid</keyword>
<keyword id="KW-0687">Ribonucleoprotein</keyword>
<keyword id="KW-0689">Ribosomal protein</keyword>
<proteinExistence type="inferred from homology"/>
<name>RR15_JASNU</name>
<feature type="chain" id="PRO_0000354262" description="Small ribosomal subunit protein uS15c">
    <location>
        <begin position="1"/>
        <end position="93"/>
    </location>
</feature>
<reference key="1">
    <citation type="journal article" date="2007" name="Mol. Biol. Evol.">
        <title>Gene relocations within chloroplast genomes of Jasminum and Menodora (Oleaceae) are due to multiple, overlapping inversions.</title>
        <authorList>
            <person name="Lee H.-L."/>
            <person name="Jansen R.K."/>
            <person name="Chumley T.W."/>
            <person name="Kim K.-J."/>
        </authorList>
    </citation>
    <scope>NUCLEOTIDE SEQUENCE [LARGE SCALE GENOMIC DNA]</scope>
</reference>
<gene>
    <name type="primary">rps15</name>
    <name type="ORF">JNC1350</name>
</gene>
<sequence>MVRNSFISIISQKENKENRGSVEFQVLSFTTKIRRLTSHLKLHKTDYSSERGLRKILGKRQRVLAYLSKKNRVRYQELQDLISQLNIRETKTR</sequence>
<geneLocation type="chloroplast"/>
<evidence type="ECO:0000250" key="1"/>
<evidence type="ECO:0000305" key="2"/>
<dbReference type="EMBL" id="DQ673255">
    <property type="protein sequence ID" value="ABG74686.1"/>
    <property type="molecule type" value="Genomic_DNA"/>
</dbReference>
<dbReference type="RefSeq" id="YP_778548.1">
    <property type="nucleotide sequence ID" value="NC_008407.1"/>
</dbReference>
<dbReference type="SMR" id="Q06R73"/>
<dbReference type="GeneID" id="4319839"/>
<dbReference type="GO" id="GO:0009507">
    <property type="term" value="C:chloroplast"/>
    <property type="evidence" value="ECO:0007669"/>
    <property type="project" value="UniProtKB-SubCell"/>
</dbReference>
<dbReference type="GO" id="GO:1990904">
    <property type="term" value="C:ribonucleoprotein complex"/>
    <property type="evidence" value="ECO:0007669"/>
    <property type="project" value="UniProtKB-KW"/>
</dbReference>
<dbReference type="GO" id="GO:0005840">
    <property type="term" value="C:ribosome"/>
    <property type="evidence" value="ECO:0007669"/>
    <property type="project" value="UniProtKB-KW"/>
</dbReference>
<dbReference type="GO" id="GO:0003735">
    <property type="term" value="F:structural constituent of ribosome"/>
    <property type="evidence" value="ECO:0007669"/>
    <property type="project" value="InterPro"/>
</dbReference>
<dbReference type="GO" id="GO:0006412">
    <property type="term" value="P:translation"/>
    <property type="evidence" value="ECO:0007669"/>
    <property type="project" value="UniProtKB-UniRule"/>
</dbReference>
<dbReference type="CDD" id="cd00677">
    <property type="entry name" value="S15_NS1_EPRS_RNA-bind"/>
    <property type="match status" value="1"/>
</dbReference>
<dbReference type="Gene3D" id="1.10.287.10">
    <property type="entry name" value="S15/NS1, RNA-binding"/>
    <property type="match status" value="1"/>
</dbReference>
<dbReference type="HAMAP" id="MF_01343_B">
    <property type="entry name" value="Ribosomal_uS15_B"/>
    <property type="match status" value="1"/>
</dbReference>
<dbReference type="InterPro" id="IPR000589">
    <property type="entry name" value="Ribosomal_uS15"/>
</dbReference>
<dbReference type="InterPro" id="IPR005290">
    <property type="entry name" value="Ribosomal_uS15_bac-type"/>
</dbReference>
<dbReference type="InterPro" id="IPR009068">
    <property type="entry name" value="uS15_NS1_RNA-bd_sf"/>
</dbReference>
<dbReference type="NCBIfam" id="TIGR00952">
    <property type="entry name" value="S15_bact"/>
    <property type="match status" value="1"/>
</dbReference>
<dbReference type="PANTHER" id="PTHR23321">
    <property type="entry name" value="RIBOSOMAL PROTEIN S15, BACTERIAL AND ORGANELLAR"/>
    <property type="match status" value="1"/>
</dbReference>
<dbReference type="PANTHER" id="PTHR23321:SF26">
    <property type="entry name" value="SMALL RIBOSOMAL SUBUNIT PROTEIN US15M"/>
    <property type="match status" value="1"/>
</dbReference>
<dbReference type="Pfam" id="PF00312">
    <property type="entry name" value="Ribosomal_S15"/>
    <property type="match status" value="1"/>
</dbReference>
<dbReference type="SMART" id="SM01387">
    <property type="entry name" value="Ribosomal_S15"/>
    <property type="match status" value="1"/>
</dbReference>
<dbReference type="SUPFAM" id="SSF47060">
    <property type="entry name" value="S15/NS1 RNA-binding domain"/>
    <property type="match status" value="1"/>
</dbReference>
<dbReference type="PROSITE" id="PS00362">
    <property type="entry name" value="RIBOSOMAL_S15"/>
    <property type="match status" value="1"/>
</dbReference>
<accession>Q06R73</accession>
<comment type="subunit">
    <text evidence="1">Part of the 30S ribosomal subunit.</text>
</comment>
<comment type="subcellular location">
    <subcellularLocation>
        <location>Plastid</location>
        <location>Chloroplast</location>
    </subcellularLocation>
</comment>
<comment type="similarity">
    <text evidence="2">Belongs to the universal ribosomal protein uS15 family.</text>
</comment>
<organism>
    <name type="scientific">Jasminum nudiflorum</name>
    <name type="common">Winter jasmine</name>
    <dbReference type="NCBI Taxonomy" id="126431"/>
    <lineage>
        <taxon>Eukaryota</taxon>
        <taxon>Viridiplantae</taxon>
        <taxon>Streptophyta</taxon>
        <taxon>Embryophyta</taxon>
        <taxon>Tracheophyta</taxon>
        <taxon>Spermatophyta</taxon>
        <taxon>Magnoliopsida</taxon>
        <taxon>eudicotyledons</taxon>
        <taxon>Gunneridae</taxon>
        <taxon>Pentapetalae</taxon>
        <taxon>asterids</taxon>
        <taxon>lamiids</taxon>
        <taxon>Lamiales</taxon>
        <taxon>Oleaceae</taxon>
        <taxon>Jasmineae</taxon>
        <taxon>Jasminum</taxon>
    </lineage>
</organism>
<protein>
    <recommendedName>
        <fullName evidence="2">Small ribosomal subunit protein uS15c</fullName>
    </recommendedName>
    <alternativeName>
        <fullName>30S ribosomal protein S15, chloroplastic</fullName>
    </alternativeName>
</protein>